<comment type="caution">
    <text evidence="2">Product of a dubious CDS prediction. May be a non-coding RNA.</text>
</comment>
<feature type="chain" id="PRO_0000254633" description="Putative uncharacterized protein encoded by LINC00467 homolog">
    <location>
        <begin position="1"/>
        <end position="113"/>
    </location>
</feature>
<feature type="region of interest" description="Disordered" evidence="1">
    <location>
        <begin position="1"/>
        <end position="94"/>
    </location>
</feature>
<feature type="compositionally biased region" description="Basic and acidic residues" evidence="1">
    <location>
        <begin position="1"/>
        <end position="19"/>
    </location>
</feature>
<feature type="compositionally biased region" description="Basic residues" evidence="1">
    <location>
        <begin position="20"/>
        <end position="41"/>
    </location>
</feature>
<feature type="compositionally biased region" description="Low complexity" evidence="1">
    <location>
        <begin position="52"/>
        <end position="66"/>
    </location>
</feature>
<feature type="compositionally biased region" description="Basic residues" evidence="1">
    <location>
        <begin position="75"/>
        <end position="92"/>
    </location>
</feature>
<evidence type="ECO:0000256" key="1">
    <source>
        <dbReference type="SAM" id="MobiDB-lite"/>
    </source>
</evidence>
<evidence type="ECO:0000305" key="2"/>
<proteinExistence type="uncertain"/>
<sequence>MDKKSAHRNPEDAKAGKYEGKHKRKKKRKQNQNQHRSRHRSVTSFSSDDRVFPSSSSSSSGSQTDSSTEDATQGKIKKKRREKTNKWRGKRKVSSEMSIILSGPQSLVHTICH</sequence>
<reference key="1">
    <citation type="submission" date="2005-06" db="EMBL/GenBank/DDBJ databases">
        <title>DNA sequences of macaque genes expressed in brain or testis and its evolutionary implications.</title>
        <authorList>
            <consortium name="International consortium for macaque cDNA sequencing and analysis"/>
        </authorList>
    </citation>
    <scope>NUCLEOTIDE SEQUENCE [LARGE SCALE MRNA]</scope>
    <source>
        <tissue>Testis</tissue>
    </source>
</reference>
<name>CA097_MACFA</name>
<keyword id="KW-1185">Reference proteome</keyword>
<dbReference type="EMBL" id="AB179360">
    <property type="protein sequence ID" value="BAE02411.1"/>
    <property type="molecule type" value="mRNA"/>
</dbReference>
<dbReference type="RefSeq" id="NP_001272232.1">
    <property type="nucleotide sequence ID" value="NM_001285303.1"/>
</dbReference>
<dbReference type="SMR" id="Q4R3A6"/>
<dbReference type="eggNOG" id="ENOG502TM5J">
    <property type="taxonomic scope" value="Eukaryota"/>
</dbReference>
<dbReference type="Proteomes" id="UP000233100">
    <property type="component" value="Unplaced"/>
</dbReference>
<accession>Q4R3A6</accession>
<protein>
    <recommendedName>
        <fullName>Putative uncharacterized protein encoded by LINC00467 homolog</fullName>
    </recommendedName>
</protein>
<gene>
    <name type="ORF">QtsA-18289</name>
</gene>
<organism>
    <name type="scientific">Macaca fascicularis</name>
    <name type="common">Crab-eating macaque</name>
    <name type="synonym">Cynomolgus monkey</name>
    <dbReference type="NCBI Taxonomy" id="9541"/>
    <lineage>
        <taxon>Eukaryota</taxon>
        <taxon>Metazoa</taxon>
        <taxon>Chordata</taxon>
        <taxon>Craniata</taxon>
        <taxon>Vertebrata</taxon>
        <taxon>Euteleostomi</taxon>
        <taxon>Mammalia</taxon>
        <taxon>Eutheria</taxon>
        <taxon>Euarchontoglires</taxon>
        <taxon>Primates</taxon>
        <taxon>Haplorrhini</taxon>
        <taxon>Catarrhini</taxon>
        <taxon>Cercopithecidae</taxon>
        <taxon>Cercopithecinae</taxon>
        <taxon>Macaca</taxon>
    </lineage>
</organism>